<organism>
    <name type="scientific">Nitrosomonas eutropha (strain DSM 101675 / C91 / Nm57)</name>
    <dbReference type="NCBI Taxonomy" id="335283"/>
    <lineage>
        <taxon>Bacteria</taxon>
        <taxon>Pseudomonadati</taxon>
        <taxon>Pseudomonadota</taxon>
        <taxon>Betaproteobacteria</taxon>
        <taxon>Nitrosomonadales</taxon>
        <taxon>Nitrosomonadaceae</taxon>
        <taxon>Nitrosomonas</taxon>
    </lineage>
</organism>
<dbReference type="EC" id="4.2.1.96" evidence="1"/>
<dbReference type="EMBL" id="CP000450">
    <property type="protein sequence ID" value="ABI60505.1"/>
    <property type="molecule type" value="Genomic_DNA"/>
</dbReference>
<dbReference type="RefSeq" id="WP_011635281.1">
    <property type="nucleotide sequence ID" value="NC_008344.1"/>
</dbReference>
<dbReference type="SMR" id="Q0ADS7"/>
<dbReference type="STRING" id="335283.Neut_2288"/>
<dbReference type="KEGG" id="net:Neut_2288"/>
<dbReference type="eggNOG" id="COG2154">
    <property type="taxonomic scope" value="Bacteria"/>
</dbReference>
<dbReference type="HOGENOM" id="CLU_081974_2_2_4"/>
<dbReference type="OrthoDB" id="9794987at2"/>
<dbReference type="Proteomes" id="UP000001966">
    <property type="component" value="Chromosome"/>
</dbReference>
<dbReference type="GO" id="GO:0008124">
    <property type="term" value="F:4-alpha-hydroxytetrahydrobiopterin dehydratase activity"/>
    <property type="evidence" value="ECO:0007669"/>
    <property type="project" value="UniProtKB-UniRule"/>
</dbReference>
<dbReference type="GO" id="GO:0006729">
    <property type="term" value="P:tetrahydrobiopterin biosynthetic process"/>
    <property type="evidence" value="ECO:0007669"/>
    <property type="project" value="InterPro"/>
</dbReference>
<dbReference type="CDD" id="cd00913">
    <property type="entry name" value="PCD_DCoH_subfamily_a"/>
    <property type="match status" value="1"/>
</dbReference>
<dbReference type="Gene3D" id="3.30.1360.20">
    <property type="entry name" value="Transcriptional coactivator/pterin dehydratase"/>
    <property type="match status" value="1"/>
</dbReference>
<dbReference type="HAMAP" id="MF_00434">
    <property type="entry name" value="Pterin_4_alpha"/>
    <property type="match status" value="1"/>
</dbReference>
<dbReference type="InterPro" id="IPR036428">
    <property type="entry name" value="PCD_sf"/>
</dbReference>
<dbReference type="InterPro" id="IPR001533">
    <property type="entry name" value="Pterin_deHydtase"/>
</dbReference>
<dbReference type="NCBIfam" id="NF002017">
    <property type="entry name" value="PRK00823.1-2"/>
    <property type="match status" value="1"/>
</dbReference>
<dbReference type="NCBIfam" id="NF002019">
    <property type="entry name" value="PRK00823.1-4"/>
    <property type="match status" value="1"/>
</dbReference>
<dbReference type="PANTHER" id="PTHR12599">
    <property type="entry name" value="PTERIN-4-ALPHA-CARBINOLAMINE DEHYDRATASE"/>
    <property type="match status" value="1"/>
</dbReference>
<dbReference type="PANTHER" id="PTHR12599:SF0">
    <property type="entry name" value="PTERIN-4-ALPHA-CARBINOLAMINE DEHYDRATASE"/>
    <property type="match status" value="1"/>
</dbReference>
<dbReference type="Pfam" id="PF01329">
    <property type="entry name" value="Pterin_4a"/>
    <property type="match status" value="1"/>
</dbReference>
<dbReference type="SUPFAM" id="SSF55248">
    <property type="entry name" value="PCD-like"/>
    <property type="match status" value="1"/>
</dbReference>
<reference key="1">
    <citation type="journal article" date="2007" name="Environ. Microbiol.">
        <title>Whole-genome analysis of the ammonia-oxidizing bacterium, Nitrosomonas eutropha C91: implications for niche adaptation.</title>
        <authorList>
            <person name="Stein L.Y."/>
            <person name="Arp D.J."/>
            <person name="Berube P.M."/>
            <person name="Chain P.S."/>
            <person name="Hauser L."/>
            <person name="Jetten M.S."/>
            <person name="Klotz M.G."/>
            <person name="Larimer F.W."/>
            <person name="Norton J.M."/>
            <person name="Op den Camp H.J.M."/>
            <person name="Shin M."/>
            <person name="Wei X."/>
        </authorList>
    </citation>
    <scope>NUCLEOTIDE SEQUENCE [LARGE SCALE GENOMIC DNA]</scope>
    <source>
        <strain>DSM 101675 / C91 / Nm57</strain>
    </source>
</reference>
<name>PHS_NITEC</name>
<sequence length="113" mass="12898">MTNICDLADRKCKPCEGGVPPLRKEEAENLLKQLEQGWQLADNRISRTFSFKNYYQTMAFVNAVAWVSHQEDHHPDMMVGYNQCRVEYTTHAIGGLSENDFICAAKVDMLLIS</sequence>
<protein>
    <recommendedName>
        <fullName evidence="1">Putative pterin-4-alpha-carbinolamine dehydratase</fullName>
        <shortName evidence="1">PHS</shortName>
        <ecNumber evidence="1">4.2.1.96</ecNumber>
    </recommendedName>
    <alternativeName>
        <fullName evidence="1">4-alpha-hydroxy-tetrahydropterin dehydratase</fullName>
    </alternativeName>
    <alternativeName>
        <fullName evidence="1">Pterin carbinolamine dehydratase</fullName>
        <shortName evidence="1">PCD</shortName>
    </alternativeName>
</protein>
<comment type="catalytic activity">
    <reaction evidence="1">
        <text>(4aS,6R)-4a-hydroxy-L-erythro-5,6,7,8-tetrahydrobiopterin = (6R)-L-erythro-6,7-dihydrobiopterin + H2O</text>
        <dbReference type="Rhea" id="RHEA:11920"/>
        <dbReference type="ChEBI" id="CHEBI:15377"/>
        <dbReference type="ChEBI" id="CHEBI:15642"/>
        <dbReference type="ChEBI" id="CHEBI:43120"/>
        <dbReference type="EC" id="4.2.1.96"/>
    </reaction>
</comment>
<comment type="similarity">
    <text evidence="1">Belongs to the pterin-4-alpha-carbinolamine dehydratase family.</text>
</comment>
<gene>
    <name type="ordered locus">Neut_2288</name>
</gene>
<proteinExistence type="inferred from homology"/>
<evidence type="ECO:0000255" key="1">
    <source>
        <dbReference type="HAMAP-Rule" id="MF_00434"/>
    </source>
</evidence>
<keyword id="KW-0456">Lyase</keyword>
<feature type="chain" id="PRO_1000050428" description="Putative pterin-4-alpha-carbinolamine dehydratase">
    <location>
        <begin position="1"/>
        <end position="113"/>
    </location>
</feature>
<accession>Q0ADS7</accession>